<sequence length="495" mass="55814">MAEKILFYIYRDSGTSSENLVRAIVDEFKNFVFRDRGIAFTSKGYSGIPLLGELPIDSPLDDIWKVVAVLFKISAREEGLIFKVHTTDYEKNPLVAEAKKSDVLPNWAHSVKDFAENVFGMNGVIHLISPTVSEKFPKRSQIDILRAVPNETRNILVTESLSEKLHSSESRNFGMHNTSVNVPVSMAYVARERPDILSLAIREFVKTDERKIKELEKRLANEHDRVMIHTIINDTDWKEVTAVADIESPTDIVSHRVSLALLAFDEKHSSIPNGVDVPVSGLFQKVGDRFEREHLEALRAKLFGSPQSATHLYQCAKSLVTGNHVQECRKIFVDEGSTSNRESDCSGNEDDSSNAKYAKKQVFKKKKRNAFGKKRELAAILDHTKPSEHSEPDYVAPDNSAALKKFERAVNGDDYYKASSDEYSLGEEEDLELFMAKPRKKILEEMKNKNKARLGIKVTERLPTVSDDEEIDVADMLRAAPPIANAEDIEDFDDI</sequence>
<feature type="chain" id="PRO_0000065301" description="Uncharacterized protein F19C6.2">
    <location>
        <begin position="1"/>
        <end position="495"/>
    </location>
</feature>
<feature type="region of interest" description="Disordered" evidence="1">
    <location>
        <begin position="337"/>
        <end position="360"/>
    </location>
</feature>
<accession>Q09307</accession>
<keyword id="KW-1185">Reference proteome</keyword>
<protein>
    <recommendedName>
        <fullName>Uncharacterized protein F19C6.2</fullName>
    </recommendedName>
</protein>
<proteinExistence type="predicted"/>
<name>YQR2_CAEEL</name>
<reference key="1">
    <citation type="journal article" date="1998" name="Science">
        <title>Genome sequence of the nematode C. elegans: a platform for investigating biology.</title>
        <authorList>
            <consortium name="The C. elegans sequencing consortium"/>
        </authorList>
    </citation>
    <scope>NUCLEOTIDE SEQUENCE [LARGE SCALE GENOMIC DNA]</scope>
    <source>
        <strain>Bristol N2</strain>
    </source>
</reference>
<dbReference type="EMBL" id="Z48006">
    <property type="protein sequence ID" value="CAA88050.1"/>
    <property type="molecule type" value="Genomic_DNA"/>
</dbReference>
<dbReference type="PIR" id="T21115">
    <property type="entry name" value="T21115"/>
</dbReference>
<dbReference type="RefSeq" id="NP_509677.1">
    <property type="nucleotide sequence ID" value="NM_077276.5"/>
</dbReference>
<dbReference type="FunCoup" id="Q09307">
    <property type="interactions" value="719"/>
</dbReference>
<dbReference type="STRING" id="6239.F19C6.2a.1"/>
<dbReference type="iPTMnet" id="Q09307"/>
<dbReference type="PaxDb" id="6239-F19C6.2a"/>
<dbReference type="PeptideAtlas" id="Q09307"/>
<dbReference type="EnsemblMetazoa" id="F19C6.2.1">
    <property type="protein sequence ID" value="F19C6.2.1"/>
    <property type="gene ID" value="WBGene00008951"/>
</dbReference>
<dbReference type="GeneID" id="181213"/>
<dbReference type="KEGG" id="cel:CELE_F19C6.2"/>
<dbReference type="UCSC" id="F19C6.2b">
    <property type="organism name" value="c. elegans"/>
</dbReference>
<dbReference type="AGR" id="WB:WBGene00008951"/>
<dbReference type="CTD" id="181213"/>
<dbReference type="WormBase" id="F19C6.2">
    <property type="protein sequence ID" value="CE03231"/>
    <property type="gene ID" value="WBGene00008951"/>
</dbReference>
<dbReference type="eggNOG" id="ENOG502TGJR">
    <property type="taxonomic scope" value="Eukaryota"/>
</dbReference>
<dbReference type="GeneTree" id="ENSGT00390000015361"/>
<dbReference type="HOGENOM" id="CLU_049371_0_0_1"/>
<dbReference type="InParanoid" id="Q09307"/>
<dbReference type="OMA" id="DRVMIHT"/>
<dbReference type="OrthoDB" id="27237at2759"/>
<dbReference type="PRO" id="PR:Q09307"/>
<dbReference type="Proteomes" id="UP000001940">
    <property type="component" value="Chromosome X"/>
</dbReference>
<dbReference type="Bgee" id="WBGene00008951">
    <property type="expression patterns" value="Expressed in pharyngeal muscle cell (C elegans) and 4 other cell types or tissues"/>
</dbReference>
<dbReference type="GO" id="GO:0005634">
    <property type="term" value="C:nucleus"/>
    <property type="evidence" value="ECO:0000318"/>
    <property type="project" value="GO_Central"/>
</dbReference>
<dbReference type="InterPro" id="IPR010770">
    <property type="entry name" value="Ecd"/>
</dbReference>
<dbReference type="PANTHER" id="PTHR13060:SF0">
    <property type="entry name" value="PROTEIN ECDYSONELESS HOMOLOG"/>
    <property type="match status" value="1"/>
</dbReference>
<dbReference type="PANTHER" id="PTHR13060">
    <property type="entry name" value="SGT1 PROTEIN HSGT1 SUPPRESSOR OF GCR2"/>
    <property type="match status" value="1"/>
</dbReference>
<dbReference type="Pfam" id="PF07093">
    <property type="entry name" value="SGT1"/>
    <property type="match status" value="1"/>
</dbReference>
<evidence type="ECO:0000256" key="1">
    <source>
        <dbReference type="SAM" id="MobiDB-lite"/>
    </source>
</evidence>
<gene>
    <name type="ORF">F19C6.2</name>
</gene>
<organism>
    <name type="scientific">Caenorhabditis elegans</name>
    <dbReference type="NCBI Taxonomy" id="6239"/>
    <lineage>
        <taxon>Eukaryota</taxon>
        <taxon>Metazoa</taxon>
        <taxon>Ecdysozoa</taxon>
        <taxon>Nematoda</taxon>
        <taxon>Chromadorea</taxon>
        <taxon>Rhabditida</taxon>
        <taxon>Rhabditina</taxon>
        <taxon>Rhabditomorpha</taxon>
        <taxon>Rhabditoidea</taxon>
        <taxon>Rhabditidae</taxon>
        <taxon>Peloderinae</taxon>
        <taxon>Caenorhabditis</taxon>
    </lineage>
</organism>